<keyword id="KW-0002">3D-structure</keyword>
<keyword id="KW-0106">Calcium</keyword>
<keyword id="KW-0903">Direct protein sequencing</keyword>
<keyword id="KW-1015">Disulfide bond</keyword>
<keyword id="KW-0325">Glycoprotein</keyword>
<keyword id="KW-0430">Lectin</keyword>
<keyword id="KW-0464">Manganese</keyword>
<keyword id="KW-0479">Metal-binding</keyword>
<keyword id="KW-0732">Signal</keyword>
<comment type="function">
    <text evidence="2 3 5">Sialic acid-binding lectin recognizing oligosaccharides containing terminal sialic acid linked via alpha-2,3 bond to penultimate galactose residues (PubMed:3350806). Binds the trisaccharide sequence Neu5Ac-alpha-2,3-Gal-beta-1,4-GlcNAc (PubMed:1985926). Binds fetuin when fully glycosylated but not when the high mannose-type glycans are removed, although the secondary structure is virtually unaffected by deglycosylation of the high mannose-type glycans (PubMed:26003537). The lectin activity may depend on the presence of a single GlcNAc attached to N-90 (PubMed:26003537).</text>
</comment>
<comment type="subunit">
    <text evidence="1 4 10">Homodimer; disulfide-linked (PubMed:27720757, PubMed:9163528). Dimer of homodimers (PubMed:10747930).</text>
</comment>
<comment type="PTM">
    <text evidence="3 4">The glycosylation on N-90 is determined to by of the high mannose type in PubMed:26003537, while PubMed:27720757 found a paucimannose at this position.</text>
</comment>
<comment type="PTM">
    <text evidence="4">Processed at its C-terminus.</text>
</comment>
<comment type="similarity">
    <text evidence="9">Belongs to the leguminous lectin family.</text>
</comment>
<feature type="signal peptide" evidence="6">
    <location>
        <begin position="1"/>
        <end position="29"/>
    </location>
</feature>
<feature type="chain" id="PRO_0000438710" description="Seed leukoagglutinin">
    <location>
        <begin position="30"/>
        <end position="278"/>
    </location>
</feature>
<feature type="propeptide" id="PRO_0000438711" description="Removed in mature form" evidence="4">
    <location>
        <begin position="279"/>
        <end position="287"/>
    </location>
</feature>
<feature type="binding site" evidence="1 11">
    <location>
        <position position="74"/>
    </location>
    <ligand>
        <name>N-acetyl-alpha-neuraminyl-(2-&gt;3)-beta-D-galactosyl-(1-&gt;4)-beta-D-glucose</name>
        <dbReference type="ChEBI" id="CHEBI:232876"/>
    </ligand>
</feature>
<feature type="binding site" evidence="1 11">
    <location>
        <position position="116"/>
    </location>
    <ligand>
        <name>N-acetyl-alpha-neuraminyl-(2-&gt;3)-beta-D-galactosyl-(1-&gt;4)-beta-D-glucose</name>
        <dbReference type="ChEBI" id="CHEBI:232876"/>
    </ligand>
</feature>
<feature type="binding site" evidence="1 11">
    <location>
        <position position="133"/>
    </location>
    <ligand>
        <name>N-acetyl-alpha-neuraminyl-(2-&gt;3)-beta-D-galactosyl-(1-&gt;4)-beta-D-glucose</name>
        <dbReference type="ChEBI" id="CHEBI:232876"/>
    </ligand>
</feature>
<feature type="binding site" evidence="1 11">
    <location>
        <position position="136"/>
    </location>
    <ligand>
        <name>N-acetyl-alpha-neuraminyl-(2-&gt;3)-beta-D-galactosyl-(1-&gt;4)-beta-D-glucose</name>
        <dbReference type="ChEBI" id="CHEBI:232876"/>
    </ligand>
</feature>
<feature type="binding site" evidence="1 11">
    <location>
        <position position="156"/>
    </location>
    <ligand>
        <name>Mn(2+)</name>
        <dbReference type="ChEBI" id="CHEBI:29035"/>
    </ligand>
</feature>
<feature type="binding site" evidence="1 11">
    <location>
        <position position="158"/>
    </location>
    <ligand>
        <name>Ca(2+)</name>
        <dbReference type="ChEBI" id="CHEBI:29108"/>
    </ligand>
</feature>
<feature type="binding site" evidence="1 11">
    <location>
        <position position="158"/>
    </location>
    <ligand>
        <name>Mn(2+)</name>
        <dbReference type="ChEBI" id="CHEBI:29035"/>
    </ligand>
</feature>
<feature type="binding site" evidence="1 11">
    <location>
        <position position="160"/>
    </location>
    <ligand>
        <name>Ca(2+)</name>
        <dbReference type="ChEBI" id="CHEBI:29108"/>
    </ligand>
</feature>
<feature type="binding site" evidence="1 11">
    <location>
        <position position="160"/>
    </location>
    <ligand>
        <name>N-acetyl-alpha-neuraminyl-(2-&gt;3)-beta-D-galactosyl-(1-&gt;4)-beta-D-glucose</name>
        <dbReference type="ChEBI" id="CHEBI:232876"/>
    </ligand>
</feature>
<feature type="binding site" evidence="1 11">
    <location>
        <position position="166"/>
    </location>
    <ligand>
        <name>Ca(2+)</name>
        <dbReference type="ChEBI" id="CHEBI:29108"/>
    </ligand>
</feature>
<feature type="binding site" evidence="1 11">
    <location>
        <position position="166"/>
    </location>
    <ligand>
        <name>N-acetyl-alpha-neuraminyl-(2-&gt;3)-beta-D-galactosyl-(1-&gt;4)-beta-D-glucose</name>
        <dbReference type="ChEBI" id="CHEBI:232876"/>
    </ligand>
</feature>
<feature type="binding site" evidence="1 11">
    <location>
        <position position="169"/>
    </location>
    <ligand>
        <name>Ca(2+)</name>
        <dbReference type="ChEBI" id="CHEBI:29108"/>
    </ligand>
</feature>
<feature type="binding site" evidence="1 11">
    <location>
        <position position="169"/>
    </location>
    <ligand>
        <name>Mn(2+)</name>
        <dbReference type="ChEBI" id="CHEBI:29035"/>
    </ligand>
</feature>
<feature type="binding site" evidence="1 11">
    <location>
        <position position="174"/>
    </location>
    <ligand>
        <name>Mn(2+)</name>
        <dbReference type="ChEBI" id="CHEBI:29035"/>
    </ligand>
</feature>
<feature type="binding site" evidence="1 11">
    <location>
        <position position="253"/>
    </location>
    <ligand>
        <name>N-acetyl-alpha-neuraminyl-(2-&gt;3)-beta-D-galactosyl-(1-&gt;4)-beta-D-glucose</name>
        <dbReference type="ChEBI" id="CHEBI:232876"/>
    </ligand>
</feature>
<feature type="glycosylation site" description="N-linked (GlcNAc...) (paucimannose) asparagine" evidence="1 4 10 11">
    <location>
        <position position="90"/>
    </location>
</feature>
<feature type="glycosylation site" description="N-linked (GlcNAc...) (paucimannose) asparagine" evidence="1 4 10 11">
    <location>
        <position position="142"/>
    </location>
</feature>
<feature type="glycosylation site" description="N-linked (GlcNAc...) (high mannose) asparagine; partial" evidence="4 10">
    <location>
        <position position="208"/>
    </location>
</feature>
<feature type="glycosylation site" description="N-linked (GlcNAc...) (paucimannose) asparagine; partial" evidence="1 4 10 11">
    <location>
        <position position="220"/>
    </location>
</feature>
<feature type="disulfide bond" description="Interchain" evidence="4 10">
    <location>
        <position position="272"/>
    </location>
</feature>
<organism>
    <name type="scientific">Maackia amurensis</name>
    <name type="common">Amur maackia</name>
    <dbReference type="NCBI Taxonomy" id="37501"/>
    <lineage>
        <taxon>Eukaryota</taxon>
        <taxon>Viridiplantae</taxon>
        <taxon>Streptophyta</taxon>
        <taxon>Embryophyta</taxon>
        <taxon>Tracheophyta</taxon>
        <taxon>Spermatophyta</taxon>
        <taxon>Magnoliopsida</taxon>
        <taxon>eudicotyledons</taxon>
        <taxon>Gunneridae</taxon>
        <taxon>Pentapetalae</taxon>
        <taxon>rosids</taxon>
        <taxon>fabids</taxon>
        <taxon>Fabales</taxon>
        <taxon>Fabaceae</taxon>
        <taxon>Papilionoideae</taxon>
        <taxon>50 kb inversion clade</taxon>
        <taxon>genistoids sensu lato</taxon>
        <taxon>core genistoids</taxon>
        <taxon>Sophoreae</taxon>
        <taxon>Maackia</taxon>
    </lineage>
</organism>
<gene>
    <name evidence="7" type="primary">MAL</name>
</gene>
<accession>P0DKL3</accession>
<proteinExistence type="evidence at protein level"/>
<protein>
    <recommendedName>
        <fullName evidence="8">Seed leukoagglutinin</fullName>
    </recommendedName>
    <alternativeName>
        <fullName evidence="7">Leukoagglutinating lectin MAL</fullName>
    </alternativeName>
    <alternativeName>
        <fullName evidence="9">Seed leucoagglutinin</fullName>
    </alternativeName>
</protein>
<evidence type="ECO:0000269" key="1">
    <source>
    </source>
</evidence>
<evidence type="ECO:0000269" key="2">
    <source>
    </source>
</evidence>
<evidence type="ECO:0000269" key="3">
    <source>
    </source>
</evidence>
<evidence type="ECO:0000269" key="4">
    <source>
    </source>
</evidence>
<evidence type="ECO:0000269" key="5">
    <source>
    </source>
</evidence>
<evidence type="ECO:0000269" key="6">
    <source>
    </source>
</evidence>
<evidence type="ECO:0000303" key="7">
    <source>
    </source>
</evidence>
<evidence type="ECO:0000303" key="8">
    <source>
    </source>
</evidence>
<evidence type="ECO:0000305" key="9"/>
<evidence type="ECO:0000305" key="10">
    <source>
    </source>
</evidence>
<evidence type="ECO:0007744" key="11">
    <source>
        <dbReference type="PDB" id="1DBN"/>
    </source>
</evidence>
<name>MALS_MAAAM</name>
<reference key="1">
    <citation type="journal article" date="1997" name="J. Biochem.">
        <title>Sialic acid-binding motif of Maackia amurensis lectins.</title>
        <authorList>
            <person name="Yamamoto K."/>
            <person name="Konami Y."/>
            <person name="Irimura T."/>
        </authorList>
    </citation>
    <scope>NUCLEOTIDE SEQUENCE [MRNA]</scope>
    <scope>PROTEIN SEQUENCE OF 30-55; 74-176 AND 187-253</scope>
    <scope>SUBUNIT</scope>
    <scope>GLYCOSYLATION AT ASN-90; ASN-142; ASN-208 AND ASN-220</scope>
    <source>
        <tissue>Seed</tissue>
    </source>
</reference>
<reference key="2">
    <citation type="journal article" date="1988" name="J. Biol. Chem.">
        <title>The immobilized leukoagglutinin from the seeds of Maackia amurensis binds with high affinity to complex-type Asn-linked oligosaccharides containing terminal sialic acid-linked alpha-2,3 to penultimate galactose residues.</title>
        <authorList>
            <person name="Wang W.C."/>
            <person name="Cummings R.D."/>
        </authorList>
    </citation>
    <scope>FUNCTION</scope>
    <source>
        <tissue>Seed</tissue>
    </source>
</reference>
<reference key="3">
    <citation type="journal article" date="1991" name="J. Biol. Chem.">
        <title>Characterization of the carbohydrate binding specificity of the leukoagglutinating lectin from Maackia amurensis. Comparison with other sialic acid-specific lectins.</title>
        <authorList>
            <person name="Knibbs R.N."/>
            <person name="Goldstein I.J."/>
            <person name="Ratcliffe R.M."/>
            <person name="Shibuya N."/>
        </authorList>
    </citation>
    <scope>FUNCTION</scope>
    <source>
        <tissue>Seed</tissue>
    </source>
</reference>
<reference key="4">
    <citation type="journal article" date="2015" name="Biochim. Biophys. Acta">
        <title>Effects of selective cleavage of high-mannose-type glycans of Maackia amurensis leukoagglutinin on sialic acid-binding activity.</title>
        <authorList>
            <person name="Kim B.S."/>
            <person name="Hwang H.S."/>
            <person name="Park H."/>
            <person name="Kim H.H."/>
        </authorList>
    </citation>
    <scope>FUNCTION</scope>
    <scope>GLYCOSYLATION</scope>
    <source>
        <tissue>Seed</tissue>
    </source>
</reference>
<reference key="5">
    <citation type="journal article" date="2016" name="Int. J. Biol. Macromol.">
        <title>Comprehensive analysis of alpha 2-3-linked sialic acid specific Maackia amurensis leukagglutinin reveals differentially occupied N-glycans and C-terminal processing.</title>
        <authorList>
            <person name="Gnanesh Kumar B.S."/>
            <person name="Surolia A."/>
        </authorList>
    </citation>
    <scope>GLYCOSYLATION AT ASN-90; ASN-142; ASN-208 AND ASN-220</scope>
    <scope>PROTEOLYTIC PROCESSING OF C-TERMINUS</scope>
    <scope>SUBUNIT</scope>
    <scope>DISULFIDE BOND</scope>
    <scope>PARTIAL PROTEIN SEQUENCE</scope>
</reference>
<reference key="6">
    <citation type="journal article" date="2000" name="J. Biol. Chem.">
        <title>An unusual carbohydrate binding site revealed by the structures of two Maackia amurensis lectins complexed with sialic acid-containing oligosaccharides.</title>
        <authorList>
            <person name="Imberty A."/>
            <person name="Gautier C."/>
            <person name="Lescar J."/>
            <person name="Perez S."/>
            <person name="Wyns L."/>
            <person name="Loris R."/>
        </authorList>
    </citation>
    <scope>X-RAY CRYSTALLOGRAPHY (2.75 ANGSTROMS) OF 30-268 IN COMPLEX WITH CALCIUM; SIALYLLACTOSE AND MANGANESE</scope>
    <scope>GLYCOSYLATION AT ASN-90; ASN-142 AND ASN-208</scope>
    <scope>SUBUNIT</scope>
</reference>
<sequence length="287" mass="31286">MATSNSKPTQVLLATFLTFFFLLLNNVNSSDELSFTINNFVPNEADLLFQGEASVSSTGVLQLTRVENGQPQKYSVGRALYAAPVRIWDNTTGSVASFSTSFTFVVKAPNPDITSDGLAFYLAPPDSQIPSGSVSKYLGLFNNSNSDSSNQIVAVELDTYFAHSYDPWDPNYRHIGIDVNGIESIKTVQWDWINGGVAFATITYLAPNKTLIASLVYPSNQTTFSVAASVDLKEILPEWVRVGFSAATGYPTEVETHDVLSWSFTSTLEANCDAATENNVHIARYTA</sequence>
<dbReference type="PIR" id="JC5444">
    <property type="entry name" value="JC5444"/>
</dbReference>
<dbReference type="PDB" id="1DBN">
    <property type="method" value="X-ray"/>
    <property type="resolution" value="2.75 A"/>
    <property type="chains" value="A/B=30-268"/>
</dbReference>
<dbReference type="PDBsum" id="1DBN"/>
<dbReference type="SMR" id="P0DKL3"/>
<dbReference type="IntAct" id="P0DKL3">
    <property type="interactions" value="1"/>
</dbReference>
<dbReference type="UniLectin" id="P0DKL3"/>
<dbReference type="GlyCosmos" id="P0DKL3">
    <property type="glycosylation" value="4 sites, No reported glycans"/>
</dbReference>
<dbReference type="iPTMnet" id="P0DKL3"/>
<dbReference type="GO" id="GO:0030246">
    <property type="term" value="F:carbohydrate binding"/>
    <property type="evidence" value="ECO:0007669"/>
    <property type="project" value="UniProtKB-KW"/>
</dbReference>
<dbReference type="GO" id="GO:0046872">
    <property type="term" value="F:metal ion binding"/>
    <property type="evidence" value="ECO:0007669"/>
    <property type="project" value="UniProtKB-KW"/>
</dbReference>
<dbReference type="CDD" id="cd06899">
    <property type="entry name" value="lectin_legume_LecRK_Arcelin_ConA"/>
    <property type="match status" value="1"/>
</dbReference>
<dbReference type="Gene3D" id="2.60.120.200">
    <property type="match status" value="1"/>
</dbReference>
<dbReference type="InterPro" id="IPR013320">
    <property type="entry name" value="ConA-like_dom_sf"/>
</dbReference>
<dbReference type="InterPro" id="IPR016363">
    <property type="entry name" value="L-lectin"/>
</dbReference>
<dbReference type="InterPro" id="IPR000985">
    <property type="entry name" value="Lectin_LegA_CS"/>
</dbReference>
<dbReference type="InterPro" id="IPR019825">
    <property type="entry name" value="Lectin_legB_Mn/Ca_BS"/>
</dbReference>
<dbReference type="InterPro" id="IPR001220">
    <property type="entry name" value="Legume_lectin_dom"/>
</dbReference>
<dbReference type="InterPro" id="IPR050258">
    <property type="entry name" value="Leguminous_Lectin"/>
</dbReference>
<dbReference type="PANTHER" id="PTHR32401">
    <property type="entry name" value="CONCANAVALIN A-LIKE LECTIN FAMILY PROTEIN"/>
    <property type="match status" value="1"/>
</dbReference>
<dbReference type="PANTHER" id="PTHR32401:SF45">
    <property type="entry name" value="LECTIN"/>
    <property type="match status" value="1"/>
</dbReference>
<dbReference type="Pfam" id="PF00139">
    <property type="entry name" value="Lectin_legB"/>
    <property type="match status" value="1"/>
</dbReference>
<dbReference type="PIRSF" id="PIRSF002690">
    <property type="entry name" value="L-type_lectin_plant"/>
    <property type="match status" value="1"/>
</dbReference>
<dbReference type="SUPFAM" id="SSF49899">
    <property type="entry name" value="Concanavalin A-like lectins/glucanases"/>
    <property type="match status" value="1"/>
</dbReference>
<dbReference type="PROSITE" id="PS00308">
    <property type="entry name" value="LECTIN_LEGUME_ALPHA"/>
    <property type="match status" value="1"/>
</dbReference>
<dbReference type="PROSITE" id="PS00307">
    <property type="entry name" value="LECTIN_LEGUME_BETA"/>
    <property type="match status" value="1"/>
</dbReference>